<protein>
    <recommendedName>
        <fullName>F-box/FBD/LRR-repeat protein At5g18770</fullName>
    </recommendedName>
</protein>
<feature type="chain" id="PRO_0000283121" description="F-box/FBD/LRR-repeat protein At5g18770">
    <location>
        <begin position="1"/>
        <end position="481"/>
    </location>
</feature>
<feature type="domain" description="F-box">
    <location>
        <begin position="23"/>
        <end position="69"/>
    </location>
</feature>
<feature type="repeat" description="LRR 1">
    <location>
        <begin position="126"/>
        <end position="153"/>
    </location>
</feature>
<feature type="repeat" description="LRR 2">
    <location>
        <begin position="159"/>
        <end position="185"/>
    </location>
</feature>
<feature type="repeat" description="LRR 3">
    <location>
        <begin position="186"/>
        <end position="211"/>
    </location>
</feature>
<feature type="repeat" description="LRR 4">
    <location>
        <begin position="214"/>
        <end position="234"/>
    </location>
</feature>
<feature type="repeat" description="LRR 5">
    <location>
        <begin position="236"/>
        <end position="261"/>
    </location>
</feature>
<feature type="repeat" description="LRR 6">
    <location>
        <begin position="289"/>
        <end position="314"/>
    </location>
</feature>
<feature type="repeat" description="LRR 7">
    <location>
        <begin position="340"/>
        <end position="368"/>
    </location>
</feature>
<feature type="domain" description="FBD">
    <location>
        <begin position="378"/>
        <end position="430"/>
    </location>
</feature>
<sequence length="481" mass="55718">MVNLMRKFAKSIGRPGTEFWRGEDMISALPDHLLCHILIFLSTDESVLTSVLSSRWRNLWKWVPRLDLNTSDFPYPNDVTCAAFIDKFLNLYNESYLREFKLRIDQANFRSNVSLYEPCLGVVIKKPNVRHFQVESDLLEHWCTSEIRLTLSACQALVCLKLHLVWLNDFESLSLPCLKIMYLEDVVFPSDAAAETLISCSPVLEDLKLSLHRDDVVVVLRVYSQSLKSFTLKRAVPVYAINGAHTVLVDTPRLVYMSLIDYQFKSFKIISMSDYVKVDLDVDFELMRDELSERNIVYDLLNNFSGVRNMTISWTTLKFIHRFHDMNPLPKFRDLTRLRATMSSDASLEVLRIVLESCPKLKHFHFTLELVNDFPEAVITGFSRVLPRCLVFSLESVEMESPITEKATELKLVRYFLENSATLKKLVLLLNHESTGEKHEPGVLKQLIESPRRSSLCQFEVLAVPPNPEPWWIYVKPQRFL</sequence>
<reference key="1">
    <citation type="journal article" date="2000" name="Nature">
        <title>Sequence and analysis of chromosome 5 of the plant Arabidopsis thaliana.</title>
        <authorList>
            <person name="Tabata S."/>
            <person name="Kaneko T."/>
            <person name="Nakamura Y."/>
            <person name="Kotani H."/>
            <person name="Kato T."/>
            <person name="Asamizu E."/>
            <person name="Miyajima N."/>
            <person name="Sasamoto S."/>
            <person name="Kimura T."/>
            <person name="Hosouchi T."/>
            <person name="Kawashima K."/>
            <person name="Kohara M."/>
            <person name="Matsumoto M."/>
            <person name="Matsuno A."/>
            <person name="Muraki A."/>
            <person name="Nakayama S."/>
            <person name="Nakazaki N."/>
            <person name="Naruo K."/>
            <person name="Okumura S."/>
            <person name="Shinpo S."/>
            <person name="Takeuchi C."/>
            <person name="Wada T."/>
            <person name="Watanabe A."/>
            <person name="Yamada M."/>
            <person name="Yasuda M."/>
            <person name="Sato S."/>
            <person name="de la Bastide M."/>
            <person name="Huang E."/>
            <person name="Spiegel L."/>
            <person name="Gnoj L."/>
            <person name="O'Shaughnessy A."/>
            <person name="Preston R."/>
            <person name="Habermann K."/>
            <person name="Murray J."/>
            <person name="Johnson D."/>
            <person name="Rohlfing T."/>
            <person name="Nelson J."/>
            <person name="Stoneking T."/>
            <person name="Pepin K."/>
            <person name="Spieth J."/>
            <person name="Sekhon M."/>
            <person name="Armstrong J."/>
            <person name="Becker M."/>
            <person name="Belter E."/>
            <person name="Cordum H."/>
            <person name="Cordes M."/>
            <person name="Courtney L."/>
            <person name="Courtney W."/>
            <person name="Dante M."/>
            <person name="Du H."/>
            <person name="Edwards J."/>
            <person name="Fryman J."/>
            <person name="Haakensen B."/>
            <person name="Lamar E."/>
            <person name="Latreille P."/>
            <person name="Leonard S."/>
            <person name="Meyer R."/>
            <person name="Mulvaney E."/>
            <person name="Ozersky P."/>
            <person name="Riley A."/>
            <person name="Strowmatt C."/>
            <person name="Wagner-McPherson C."/>
            <person name="Wollam A."/>
            <person name="Yoakum M."/>
            <person name="Bell M."/>
            <person name="Dedhia N."/>
            <person name="Parnell L."/>
            <person name="Shah R."/>
            <person name="Rodriguez M."/>
            <person name="Hoon See L."/>
            <person name="Vil D."/>
            <person name="Baker J."/>
            <person name="Kirchoff K."/>
            <person name="Toth K."/>
            <person name="King L."/>
            <person name="Bahret A."/>
            <person name="Miller B."/>
            <person name="Marra M.A."/>
            <person name="Martienssen R."/>
            <person name="McCombie W.R."/>
            <person name="Wilson R.K."/>
            <person name="Murphy G."/>
            <person name="Bancroft I."/>
            <person name="Volckaert G."/>
            <person name="Wambutt R."/>
            <person name="Duesterhoeft A."/>
            <person name="Stiekema W."/>
            <person name="Pohl T."/>
            <person name="Entian K.-D."/>
            <person name="Terryn N."/>
            <person name="Hartley N."/>
            <person name="Bent E."/>
            <person name="Johnson S."/>
            <person name="Langham S.-A."/>
            <person name="McCullagh B."/>
            <person name="Robben J."/>
            <person name="Grymonprez B."/>
            <person name="Zimmermann W."/>
            <person name="Ramsperger U."/>
            <person name="Wedler H."/>
            <person name="Balke K."/>
            <person name="Wedler E."/>
            <person name="Peters S."/>
            <person name="van Staveren M."/>
            <person name="Dirkse W."/>
            <person name="Mooijman P."/>
            <person name="Klein Lankhorst R."/>
            <person name="Weitzenegger T."/>
            <person name="Bothe G."/>
            <person name="Rose M."/>
            <person name="Hauf J."/>
            <person name="Berneiser S."/>
            <person name="Hempel S."/>
            <person name="Feldpausch M."/>
            <person name="Lamberth S."/>
            <person name="Villarroel R."/>
            <person name="Gielen J."/>
            <person name="Ardiles W."/>
            <person name="Bents O."/>
            <person name="Lemcke K."/>
            <person name="Kolesov G."/>
            <person name="Mayer K.F.X."/>
            <person name="Rudd S."/>
            <person name="Schoof H."/>
            <person name="Schueller C."/>
            <person name="Zaccaria P."/>
            <person name="Mewes H.-W."/>
            <person name="Bevan M."/>
            <person name="Fransz P.F."/>
        </authorList>
    </citation>
    <scope>NUCLEOTIDE SEQUENCE [LARGE SCALE GENOMIC DNA]</scope>
    <source>
        <strain>cv. Columbia</strain>
    </source>
</reference>
<reference key="2">
    <citation type="journal article" date="2017" name="Plant J.">
        <title>Araport11: a complete reannotation of the Arabidopsis thaliana reference genome.</title>
        <authorList>
            <person name="Cheng C.Y."/>
            <person name="Krishnakumar V."/>
            <person name="Chan A.P."/>
            <person name="Thibaud-Nissen F."/>
            <person name="Schobel S."/>
            <person name="Town C.D."/>
        </authorList>
    </citation>
    <scope>GENOME REANNOTATION</scope>
    <source>
        <strain>cv. Columbia</strain>
    </source>
</reference>
<reference key="3">
    <citation type="journal article" date="2003" name="Science">
        <title>Empirical analysis of transcriptional activity in the Arabidopsis genome.</title>
        <authorList>
            <person name="Yamada K."/>
            <person name="Lim J."/>
            <person name="Dale J.M."/>
            <person name="Chen H."/>
            <person name="Shinn P."/>
            <person name="Palm C.J."/>
            <person name="Southwick A.M."/>
            <person name="Wu H.C."/>
            <person name="Kim C.J."/>
            <person name="Nguyen M."/>
            <person name="Pham P.K."/>
            <person name="Cheuk R.F."/>
            <person name="Karlin-Newmann G."/>
            <person name="Liu S.X."/>
            <person name="Lam B."/>
            <person name="Sakano H."/>
            <person name="Wu T."/>
            <person name="Yu G."/>
            <person name="Miranda M."/>
            <person name="Quach H.L."/>
            <person name="Tripp M."/>
            <person name="Chang C.H."/>
            <person name="Lee J.M."/>
            <person name="Toriumi M.J."/>
            <person name="Chan M.M."/>
            <person name="Tang C.C."/>
            <person name="Onodera C.S."/>
            <person name="Deng J.M."/>
            <person name="Akiyama K."/>
            <person name="Ansari Y."/>
            <person name="Arakawa T."/>
            <person name="Banh J."/>
            <person name="Banno F."/>
            <person name="Bowser L."/>
            <person name="Brooks S.Y."/>
            <person name="Carninci P."/>
            <person name="Chao Q."/>
            <person name="Choy N."/>
            <person name="Enju A."/>
            <person name="Goldsmith A.D."/>
            <person name="Gurjal M."/>
            <person name="Hansen N.F."/>
            <person name="Hayashizaki Y."/>
            <person name="Johnson-Hopson C."/>
            <person name="Hsuan V.W."/>
            <person name="Iida K."/>
            <person name="Karnes M."/>
            <person name="Khan S."/>
            <person name="Koesema E."/>
            <person name="Ishida J."/>
            <person name="Jiang P.X."/>
            <person name="Jones T."/>
            <person name="Kawai J."/>
            <person name="Kamiya A."/>
            <person name="Meyers C."/>
            <person name="Nakajima M."/>
            <person name="Narusaka M."/>
            <person name="Seki M."/>
            <person name="Sakurai T."/>
            <person name="Satou M."/>
            <person name="Tamse R."/>
            <person name="Vaysberg M."/>
            <person name="Wallender E.K."/>
            <person name="Wong C."/>
            <person name="Yamamura Y."/>
            <person name="Yuan S."/>
            <person name="Shinozaki K."/>
            <person name="Davis R.W."/>
            <person name="Theologis A."/>
            <person name="Ecker J.R."/>
        </authorList>
    </citation>
    <scope>NUCLEOTIDE SEQUENCE [LARGE SCALE MRNA]</scope>
    <source>
        <strain>cv. Columbia</strain>
    </source>
</reference>
<gene>
    <name type="ordered locus">At5g18770</name>
    <name type="ORF">F17K4.20</name>
</gene>
<proteinExistence type="evidence at transcript level"/>
<name>FDL29_ARATH</name>
<keyword id="KW-0433">Leucine-rich repeat</keyword>
<keyword id="KW-1185">Reference proteome</keyword>
<keyword id="KW-0677">Repeat</keyword>
<organism>
    <name type="scientific">Arabidopsis thaliana</name>
    <name type="common">Mouse-ear cress</name>
    <dbReference type="NCBI Taxonomy" id="3702"/>
    <lineage>
        <taxon>Eukaryota</taxon>
        <taxon>Viridiplantae</taxon>
        <taxon>Streptophyta</taxon>
        <taxon>Embryophyta</taxon>
        <taxon>Tracheophyta</taxon>
        <taxon>Spermatophyta</taxon>
        <taxon>Magnoliopsida</taxon>
        <taxon>eudicotyledons</taxon>
        <taxon>Gunneridae</taxon>
        <taxon>Pentapetalae</taxon>
        <taxon>rosids</taxon>
        <taxon>malvids</taxon>
        <taxon>Brassicales</taxon>
        <taxon>Brassicaceae</taxon>
        <taxon>Camelineae</taxon>
        <taxon>Arabidopsis</taxon>
    </lineage>
</organism>
<dbReference type="EMBL" id="AC051627">
    <property type="status" value="NOT_ANNOTATED_CDS"/>
    <property type="molecule type" value="Genomic_DNA"/>
</dbReference>
<dbReference type="EMBL" id="AC068655">
    <property type="status" value="NOT_ANNOTATED_CDS"/>
    <property type="molecule type" value="Genomic_DNA"/>
</dbReference>
<dbReference type="EMBL" id="CP002688">
    <property type="protein sequence ID" value="AED92609.1"/>
    <property type="molecule type" value="Genomic_DNA"/>
</dbReference>
<dbReference type="EMBL" id="AY056813">
    <property type="protein sequence ID" value="AAL10504.1"/>
    <property type="molecule type" value="mRNA"/>
</dbReference>
<dbReference type="EMBL" id="AY133529">
    <property type="protein sequence ID" value="AAM91359.1"/>
    <property type="molecule type" value="mRNA"/>
</dbReference>
<dbReference type="RefSeq" id="NP_197378.1">
    <property type="nucleotide sequence ID" value="NM_121882.4"/>
</dbReference>
<dbReference type="FunCoup" id="Q93ZK9">
    <property type="interactions" value="254"/>
</dbReference>
<dbReference type="STRING" id="3702.Q93ZK9"/>
<dbReference type="PaxDb" id="3702-AT5G18770.1"/>
<dbReference type="ProteomicsDB" id="230612"/>
<dbReference type="EnsemblPlants" id="AT5G18770.1">
    <property type="protein sequence ID" value="AT5G18770.1"/>
    <property type="gene ID" value="AT5G18770"/>
</dbReference>
<dbReference type="GeneID" id="831995"/>
<dbReference type="Gramene" id="AT5G18770.1">
    <property type="protein sequence ID" value="AT5G18770.1"/>
    <property type="gene ID" value="AT5G18770"/>
</dbReference>
<dbReference type="KEGG" id="ath:AT5G18770"/>
<dbReference type="Araport" id="AT5G18770"/>
<dbReference type="TAIR" id="AT5G18770"/>
<dbReference type="HOGENOM" id="CLU_010721_1_3_1"/>
<dbReference type="InParanoid" id="Q93ZK9"/>
<dbReference type="OMA" id="PEPWWIY"/>
<dbReference type="OrthoDB" id="1094345at2759"/>
<dbReference type="PhylomeDB" id="Q93ZK9"/>
<dbReference type="PRO" id="PR:Q93ZK9"/>
<dbReference type="Proteomes" id="UP000006548">
    <property type="component" value="Chromosome 5"/>
</dbReference>
<dbReference type="ExpressionAtlas" id="Q93ZK9">
    <property type="expression patterns" value="baseline and differential"/>
</dbReference>
<dbReference type="GO" id="GO:0009507">
    <property type="term" value="C:chloroplast"/>
    <property type="evidence" value="ECO:0007005"/>
    <property type="project" value="TAIR"/>
</dbReference>
<dbReference type="CDD" id="cd22160">
    <property type="entry name" value="F-box_AtFBL13-like"/>
    <property type="match status" value="1"/>
</dbReference>
<dbReference type="InterPro" id="IPR036047">
    <property type="entry name" value="F-box-like_dom_sf"/>
</dbReference>
<dbReference type="InterPro" id="IPR053781">
    <property type="entry name" value="F-box_AtFBL13-like"/>
</dbReference>
<dbReference type="InterPro" id="IPR001810">
    <property type="entry name" value="F-box_dom"/>
</dbReference>
<dbReference type="InterPro" id="IPR006566">
    <property type="entry name" value="FBD"/>
</dbReference>
<dbReference type="InterPro" id="IPR050232">
    <property type="entry name" value="FBL13/AtMIF1-like"/>
</dbReference>
<dbReference type="InterPro" id="IPR013101">
    <property type="entry name" value="LRR_PRU1-like"/>
</dbReference>
<dbReference type="PANTHER" id="PTHR31900">
    <property type="entry name" value="F-BOX/RNI SUPERFAMILY PROTEIN-RELATED"/>
    <property type="match status" value="1"/>
</dbReference>
<dbReference type="PANTHER" id="PTHR31900:SF33">
    <property type="entry name" value="PROTEIN WITH RNI-LIKE_FBD-LIKE DOMAIN"/>
    <property type="match status" value="1"/>
</dbReference>
<dbReference type="Pfam" id="PF00646">
    <property type="entry name" value="F-box"/>
    <property type="match status" value="1"/>
</dbReference>
<dbReference type="Pfam" id="PF08387">
    <property type="entry name" value="FBD"/>
    <property type="match status" value="1"/>
</dbReference>
<dbReference type="Pfam" id="PF07723">
    <property type="entry name" value="LRR_2"/>
    <property type="match status" value="1"/>
</dbReference>
<dbReference type="SMART" id="SM00579">
    <property type="entry name" value="FBD"/>
    <property type="match status" value="1"/>
</dbReference>
<dbReference type="SUPFAM" id="SSF81383">
    <property type="entry name" value="F-box domain"/>
    <property type="match status" value="1"/>
</dbReference>
<dbReference type="SUPFAM" id="SSF52047">
    <property type="entry name" value="RNI-like"/>
    <property type="match status" value="1"/>
</dbReference>
<accession>Q93ZK9</accession>